<name>FLGH_GEOSL</name>
<feature type="signal peptide" evidence="2">
    <location>
        <begin position="1"/>
        <end position="15"/>
    </location>
</feature>
<feature type="chain" id="PRO_0000009447" description="Flagellar L-ring protein">
    <location>
        <begin position="16"/>
        <end position="226"/>
    </location>
</feature>
<feature type="lipid moiety-binding region" description="N-palmitoyl cysteine" evidence="2">
    <location>
        <position position="16"/>
    </location>
</feature>
<feature type="lipid moiety-binding region" description="S-diacylglycerol cysteine" evidence="2">
    <location>
        <position position="16"/>
    </location>
</feature>
<organism>
    <name type="scientific">Geobacter sulfurreducens (strain ATCC 51573 / DSM 12127 / PCA)</name>
    <dbReference type="NCBI Taxonomy" id="243231"/>
    <lineage>
        <taxon>Bacteria</taxon>
        <taxon>Pseudomonadati</taxon>
        <taxon>Thermodesulfobacteriota</taxon>
        <taxon>Desulfuromonadia</taxon>
        <taxon>Geobacterales</taxon>
        <taxon>Geobacteraceae</taxon>
        <taxon>Geobacter</taxon>
    </lineage>
</organism>
<proteinExistence type="inferred from homology"/>
<keyword id="KW-0975">Bacterial flagellum</keyword>
<keyword id="KW-0998">Cell outer membrane</keyword>
<keyword id="KW-0449">Lipoprotein</keyword>
<keyword id="KW-0472">Membrane</keyword>
<keyword id="KW-0564">Palmitate</keyword>
<keyword id="KW-1185">Reference proteome</keyword>
<keyword id="KW-0732">Signal</keyword>
<sequence length="226" mass="24591">MKRLAMSIICLALAGCAVEKTEVRTPTFDEQLRPAPPSYANGSIWQASTTGLAVDHKARSRGDIITVLIVEQASASKEATTDTERKAEVSASVPYLMGLEKSSTLFSKLTNANPNNLLGASTNSKYEGSGATTRKENLLATMTAKITDVLPNGNFLIEGRRNVKVNNEDQILVLQGTIRPRDVSPDNTISSTMIADARISYTGNGVISDRQRPGWLMNILDYIWPF</sequence>
<accession>Q748F4</accession>
<comment type="function">
    <text evidence="1">Assembles around the rod to form the L-ring and probably protects the motor/basal body from shearing forces during rotation.</text>
</comment>
<comment type="subunit">
    <text evidence="1">The basal body constitutes a major portion of the flagellar organelle and consists of four rings (L,P,S, and M) mounted on a central rod.</text>
</comment>
<comment type="subcellular location">
    <subcellularLocation>
        <location evidence="1">Cell outer membrane</location>
        <topology evidence="1">Lipid-anchor</topology>
    </subcellularLocation>
    <subcellularLocation>
        <location evidence="1">Bacterial flagellum basal body</location>
    </subcellularLocation>
</comment>
<comment type="similarity">
    <text evidence="3">Belongs to the FlgH family.</text>
</comment>
<evidence type="ECO:0000250" key="1"/>
<evidence type="ECO:0000255" key="2"/>
<evidence type="ECO:0000305" key="3"/>
<reference key="1">
    <citation type="journal article" date="2003" name="Science">
        <title>Genome of Geobacter sulfurreducens: metal reduction in subsurface environments.</title>
        <authorList>
            <person name="Methe B.A."/>
            <person name="Nelson K.E."/>
            <person name="Eisen J.A."/>
            <person name="Paulsen I.T."/>
            <person name="Nelson W.C."/>
            <person name="Heidelberg J.F."/>
            <person name="Wu D."/>
            <person name="Wu M."/>
            <person name="Ward N.L."/>
            <person name="Beanan M.J."/>
            <person name="Dodson R.J."/>
            <person name="Madupu R."/>
            <person name="Brinkac L.M."/>
            <person name="Daugherty S.C."/>
            <person name="DeBoy R.T."/>
            <person name="Durkin A.S."/>
            <person name="Gwinn M.L."/>
            <person name="Kolonay J.F."/>
            <person name="Sullivan S.A."/>
            <person name="Haft D.H."/>
            <person name="Selengut J."/>
            <person name="Davidsen T.M."/>
            <person name="Zafar N."/>
            <person name="White O."/>
            <person name="Tran B."/>
            <person name="Romero C."/>
            <person name="Forberger H.A."/>
            <person name="Weidman J.F."/>
            <person name="Khouri H.M."/>
            <person name="Feldblyum T.V."/>
            <person name="Utterback T.R."/>
            <person name="Van Aken S.E."/>
            <person name="Lovley D.R."/>
            <person name="Fraser C.M."/>
        </authorList>
    </citation>
    <scope>NUCLEOTIDE SEQUENCE [LARGE SCALE GENOMIC DNA]</scope>
    <source>
        <strain>ATCC 51573 / DSM 12127 / PCA</strain>
    </source>
</reference>
<protein>
    <recommendedName>
        <fullName>Flagellar L-ring protein</fullName>
    </recommendedName>
    <alternativeName>
        <fullName>Basal body L-ring protein</fullName>
    </alternativeName>
</protein>
<gene>
    <name type="primary">flgH</name>
    <name type="ordered locus">GSU3048</name>
</gene>
<dbReference type="EMBL" id="AE017180">
    <property type="protein sequence ID" value="AAR36440.2"/>
    <property type="molecule type" value="Genomic_DNA"/>
</dbReference>
<dbReference type="RefSeq" id="NP_954090.2">
    <property type="nucleotide sequence ID" value="NC_002939.5"/>
</dbReference>
<dbReference type="RefSeq" id="WP_010943674.1">
    <property type="nucleotide sequence ID" value="NC_002939.5"/>
</dbReference>
<dbReference type="SMR" id="Q748F4"/>
<dbReference type="FunCoup" id="Q748F4">
    <property type="interactions" value="97"/>
</dbReference>
<dbReference type="STRING" id="243231.GSU3048"/>
<dbReference type="DNASU" id="2685212"/>
<dbReference type="EnsemblBacteria" id="AAR36440">
    <property type="protein sequence ID" value="AAR36440"/>
    <property type="gene ID" value="GSU3048"/>
</dbReference>
<dbReference type="KEGG" id="gsu:GSU3048"/>
<dbReference type="PATRIC" id="fig|243231.5.peg.3072"/>
<dbReference type="eggNOG" id="COG2063">
    <property type="taxonomic scope" value="Bacteria"/>
</dbReference>
<dbReference type="HOGENOM" id="CLU_069313_0_2_7"/>
<dbReference type="InParanoid" id="Q748F4"/>
<dbReference type="OrthoDB" id="9789227at2"/>
<dbReference type="Proteomes" id="UP000000577">
    <property type="component" value="Chromosome"/>
</dbReference>
<dbReference type="GO" id="GO:0009427">
    <property type="term" value="C:bacterial-type flagellum basal body, distal rod, L ring"/>
    <property type="evidence" value="ECO:0007669"/>
    <property type="project" value="InterPro"/>
</dbReference>
<dbReference type="GO" id="GO:0009279">
    <property type="term" value="C:cell outer membrane"/>
    <property type="evidence" value="ECO:0007669"/>
    <property type="project" value="UniProtKB-SubCell"/>
</dbReference>
<dbReference type="GO" id="GO:0003774">
    <property type="term" value="F:cytoskeletal motor activity"/>
    <property type="evidence" value="ECO:0007669"/>
    <property type="project" value="InterPro"/>
</dbReference>
<dbReference type="GO" id="GO:0071973">
    <property type="term" value="P:bacterial-type flagellum-dependent cell motility"/>
    <property type="evidence" value="ECO:0007669"/>
    <property type="project" value="InterPro"/>
</dbReference>
<dbReference type="HAMAP" id="MF_00415">
    <property type="entry name" value="FlgH"/>
    <property type="match status" value="1"/>
</dbReference>
<dbReference type="InterPro" id="IPR000527">
    <property type="entry name" value="Flag_Lring"/>
</dbReference>
<dbReference type="PANTHER" id="PTHR34933">
    <property type="entry name" value="FLAGELLAR L-RING PROTEIN"/>
    <property type="match status" value="1"/>
</dbReference>
<dbReference type="PANTHER" id="PTHR34933:SF1">
    <property type="entry name" value="FLAGELLAR L-RING PROTEIN"/>
    <property type="match status" value="1"/>
</dbReference>
<dbReference type="Pfam" id="PF02107">
    <property type="entry name" value="FlgH"/>
    <property type="match status" value="1"/>
</dbReference>
<dbReference type="PRINTS" id="PR01008">
    <property type="entry name" value="FLGLRINGFLGH"/>
</dbReference>
<dbReference type="PROSITE" id="PS51257">
    <property type="entry name" value="PROKAR_LIPOPROTEIN"/>
    <property type="match status" value="1"/>
</dbReference>